<dbReference type="EMBL" id="U18997">
    <property type="protein sequence ID" value="AAA58198.1"/>
    <property type="status" value="ALT_INIT"/>
    <property type="molecule type" value="Genomic_DNA"/>
</dbReference>
<dbReference type="EMBL" id="U00096">
    <property type="protein sequence ID" value="AAC76426.2"/>
    <property type="molecule type" value="Genomic_DNA"/>
</dbReference>
<dbReference type="EMBL" id="AP009048">
    <property type="protein sequence ID" value="BAE77890.1"/>
    <property type="molecule type" value="Genomic_DNA"/>
</dbReference>
<dbReference type="PIR" id="D65135">
    <property type="entry name" value="D65135"/>
</dbReference>
<dbReference type="RefSeq" id="NP_417860.2">
    <property type="nucleotide sequence ID" value="NC_000913.3"/>
</dbReference>
<dbReference type="RefSeq" id="WP_001135574.1">
    <property type="nucleotide sequence ID" value="NZ_STEB01000004.1"/>
</dbReference>
<dbReference type="PDB" id="1HW7">
    <property type="method" value="X-ray"/>
    <property type="resolution" value="2.20 A"/>
    <property type="chains" value="A=1-253"/>
</dbReference>
<dbReference type="PDB" id="1I7F">
    <property type="method" value="X-ray"/>
    <property type="resolution" value="2.70 A"/>
    <property type="chains" value="A=1-292"/>
</dbReference>
<dbReference type="PDB" id="1XJH">
    <property type="method" value="NMR"/>
    <property type="chains" value="A=225-285"/>
</dbReference>
<dbReference type="PDB" id="3M7M">
    <property type="method" value="X-ray"/>
    <property type="resolution" value="2.90 A"/>
    <property type="chains" value="X=1-233"/>
</dbReference>
<dbReference type="PDBsum" id="1HW7"/>
<dbReference type="PDBsum" id="1I7F"/>
<dbReference type="PDBsum" id="1XJH"/>
<dbReference type="PDBsum" id="3M7M"/>
<dbReference type="SMR" id="P0A6Y5"/>
<dbReference type="BioGRID" id="4262486">
    <property type="interactions" value="23"/>
</dbReference>
<dbReference type="DIP" id="DIP-48013N"/>
<dbReference type="FunCoup" id="P0A6Y5">
    <property type="interactions" value="384"/>
</dbReference>
<dbReference type="IntAct" id="P0A6Y5">
    <property type="interactions" value="11"/>
</dbReference>
<dbReference type="MINT" id="P0A6Y5"/>
<dbReference type="STRING" id="511145.b3401"/>
<dbReference type="DrugBank" id="DB03814">
    <property type="generic name" value="2-(N-morpholino)ethanesulfonic acid"/>
</dbReference>
<dbReference type="jPOST" id="P0A6Y5"/>
<dbReference type="PaxDb" id="511145-b3401"/>
<dbReference type="EnsemblBacteria" id="AAC76426">
    <property type="protein sequence ID" value="AAC76426"/>
    <property type="gene ID" value="b3401"/>
</dbReference>
<dbReference type="GeneID" id="93778597"/>
<dbReference type="GeneID" id="947178"/>
<dbReference type="KEGG" id="ecj:JW5692"/>
<dbReference type="KEGG" id="eco:b3401"/>
<dbReference type="KEGG" id="ecoc:C3026_18450"/>
<dbReference type="PATRIC" id="fig|1411691.4.peg.3329"/>
<dbReference type="EchoBASE" id="EB2766"/>
<dbReference type="eggNOG" id="COG1281">
    <property type="taxonomic scope" value="Bacteria"/>
</dbReference>
<dbReference type="HOGENOM" id="CLU_054493_0_0_6"/>
<dbReference type="InParanoid" id="P0A6Y5"/>
<dbReference type="OMA" id="DMQCECC"/>
<dbReference type="OrthoDB" id="9793753at2"/>
<dbReference type="PhylomeDB" id="P0A6Y5"/>
<dbReference type="BioCyc" id="EcoCyc:G7744-MONOMER"/>
<dbReference type="EvolutionaryTrace" id="P0A6Y5"/>
<dbReference type="PRO" id="PR:P0A6Y5"/>
<dbReference type="Proteomes" id="UP000000625">
    <property type="component" value="Chromosome"/>
</dbReference>
<dbReference type="GO" id="GO:0005737">
    <property type="term" value="C:cytoplasm"/>
    <property type="evidence" value="ECO:0000318"/>
    <property type="project" value="GO_Central"/>
</dbReference>
<dbReference type="GO" id="GO:0005829">
    <property type="term" value="C:cytosol"/>
    <property type="evidence" value="ECO:0000314"/>
    <property type="project" value="EcoCyc"/>
</dbReference>
<dbReference type="GO" id="GO:0042802">
    <property type="term" value="F:identical protein binding"/>
    <property type="evidence" value="ECO:0000353"/>
    <property type="project" value="IntAct"/>
</dbReference>
<dbReference type="GO" id="GO:0044183">
    <property type="term" value="F:protein folding chaperone"/>
    <property type="evidence" value="ECO:0000314"/>
    <property type="project" value="EcoCyc"/>
</dbReference>
<dbReference type="GO" id="GO:0051082">
    <property type="term" value="F:unfolded protein binding"/>
    <property type="evidence" value="ECO:0007669"/>
    <property type="project" value="UniProtKB-UniRule"/>
</dbReference>
<dbReference type="GO" id="GO:0008270">
    <property type="term" value="F:zinc ion binding"/>
    <property type="evidence" value="ECO:0000314"/>
    <property type="project" value="EcoCyc"/>
</dbReference>
<dbReference type="GO" id="GO:0036506">
    <property type="term" value="P:maintenance of unfolded protein"/>
    <property type="evidence" value="ECO:0000314"/>
    <property type="project" value="EcoCyc"/>
</dbReference>
<dbReference type="GO" id="GO:0042026">
    <property type="term" value="P:protein refolding"/>
    <property type="evidence" value="ECO:0000314"/>
    <property type="project" value="EcoCyc"/>
</dbReference>
<dbReference type="GO" id="GO:0009408">
    <property type="term" value="P:response to heat"/>
    <property type="evidence" value="ECO:0000270"/>
    <property type="project" value="EcoliWiki"/>
</dbReference>
<dbReference type="GO" id="GO:0006979">
    <property type="term" value="P:response to oxidative stress"/>
    <property type="evidence" value="ECO:0000314"/>
    <property type="project" value="EcoCyc"/>
</dbReference>
<dbReference type="CDD" id="cd00498">
    <property type="entry name" value="Hsp33"/>
    <property type="match status" value="1"/>
</dbReference>
<dbReference type="FunFam" id="3.55.30.10:FF:000001">
    <property type="entry name" value="33 kDa chaperonin"/>
    <property type="match status" value="1"/>
</dbReference>
<dbReference type="Gene3D" id="1.10.287.480">
    <property type="entry name" value="helix hairpin bin"/>
    <property type="match status" value="1"/>
</dbReference>
<dbReference type="Gene3D" id="3.55.30.10">
    <property type="entry name" value="Hsp33 domain"/>
    <property type="match status" value="1"/>
</dbReference>
<dbReference type="Gene3D" id="3.90.1280.10">
    <property type="entry name" value="HSP33 redox switch-like"/>
    <property type="match status" value="1"/>
</dbReference>
<dbReference type="HAMAP" id="MF_00117">
    <property type="entry name" value="HslO"/>
    <property type="match status" value="1"/>
</dbReference>
<dbReference type="InterPro" id="IPR000397">
    <property type="entry name" value="Heat_shock_Hsp33"/>
</dbReference>
<dbReference type="InterPro" id="IPR016154">
    <property type="entry name" value="Heat_shock_Hsp33_C"/>
</dbReference>
<dbReference type="InterPro" id="IPR016153">
    <property type="entry name" value="Heat_shock_Hsp33_N"/>
</dbReference>
<dbReference type="InterPro" id="IPR023212">
    <property type="entry name" value="Hsp33_helix_hairpin_bin_dom_sf"/>
</dbReference>
<dbReference type="NCBIfam" id="NF001033">
    <property type="entry name" value="PRK00114.1"/>
    <property type="match status" value="1"/>
</dbReference>
<dbReference type="PANTHER" id="PTHR30111">
    <property type="entry name" value="33 KDA CHAPERONIN"/>
    <property type="match status" value="1"/>
</dbReference>
<dbReference type="PANTHER" id="PTHR30111:SF1">
    <property type="entry name" value="33 KDA CHAPERONIN"/>
    <property type="match status" value="1"/>
</dbReference>
<dbReference type="Pfam" id="PF01430">
    <property type="entry name" value="HSP33"/>
    <property type="match status" value="1"/>
</dbReference>
<dbReference type="PIRSF" id="PIRSF005261">
    <property type="entry name" value="Heat_shock_Hsp33"/>
    <property type="match status" value="1"/>
</dbReference>
<dbReference type="SUPFAM" id="SSF64397">
    <property type="entry name" value="Hsp33 domain"/>
    <property type="match status" value="1"/>
</dbReference>
<dbReference type="SUPFAM" id="SSF118352">
    <property type="entry name" value="HSP33 redox switch-like"/>
    <property type="match status" value="1"/>
</dbReference>
<proteinExistence type="evidence at protein level"/>
<keyword id="KW-0002">3D-structure</keyword>
<keyword id="KW-0143">Chaperone</keyword>
<keyword id="KW-0963">Cytoplasm</keyword>
<keyword id="KW-1015">Disulfide bond</keyword>
<keyword id="KW-0676">Redox-active center</keyword>
<keyword id="KW-1185">Reference proteome</keyword>
<keyword id="KW-0346">Stress response</keyword>
<keyword id="KW-0862">Zinc</keyword>
<feature type="chain" id="PRO_0000192174" description="33 kDa chaperonin">
    <location>
        <begin position="1"/>
        <end position="292"/>
    </location>
</feature>
<feature type="disulfide bond" description="Redox-active" evidence="1 2">
    <location>
        <begin position="230"/>
        <end position="232"/>
    </location>
</feature>
<feature type="disulfide bond" description="Redox-active" evidence="1 2">
    <location>
        <begin position="263"/>
        <end position="266"/>
    </location>
</feature>
<feature type="strand" evidence="4">
    <location>
        <begin position="6"/>
        <end position="12"/>
    </location>
</feature>
<feature type="turn" evidence="4">
    <location>
        <begin position="13"/>
        <end position="16"/>
    </location>
</feature>
<feature type="strand" evidence="4">
    <location>
        <begin position="17"/>
        <end position="23"/>
    </location>
</feature>
<feature type="helix" evidence="4">
    <location>
        <begin position="25"/>
        <end position="32"/>
    </location>
</feature>
<feature type="helix" evidence="4">
    <location>
        <begin position="39"/>
        <end position="56"/>
    </location>
</feature>
<feature type="strand" evidence="4">
    <location>
        <begin position="60"/>
        <end position="75"/>
    </location>
</feature>
<feature type="strand" evidence="4">
    <location>
        <begin position="77"/>
        <end position="83"/>
    </location>
</feature>
<feature type="strand" evidence="4">
    <location>
        <begin position="88"/>
        <end position="93"/>
    </location>
</feature>
<feature type="helix" evidence="4">
    <location>
        <begin position="104"/>
        <end position="108"/>
    </location>
</feature>
<feature type="strand" evidence="4">
    <location>
        <begin position="110"/>
        <end position="122"/>
    </location>
</feature>
<feature type="strand" evidence="4">
    <location>
        <begin position="125"/>
        <end position="131"/>
    </location>
</feature>
<feature type="strand" evidence="4">
    <location>
        <begin position="133"/>
        <end position="135"/>
    </location>
</feature>
<feature type="helix" evidence="4">
    <location>
        <begin position="136"/>
        <end position="147"/>
    </location>
</feature>
<feature type="strand" evidence="4">
    <location>
        <begin position="152"/>
        <end position="161"/>
    </location>
</feature>
<feature type="strand" evidence="4">
    <location>
        <begin position="164"/>
        <end position="174"/>
    </location>
</feature>
<feature type="turn" evidence="6">
    <location>
        <begin position="176"/>
        <end position="179"/>
    </location>
</feature>
<feature type="helix" evidence="4">
    <location>
        <begin position="182"/>
        <end position="193"/>
    </location>
</feature>
<feature type="helix" evidence="4">
    <location>
        <begin position="197"/>
        <end position="202"/>
    </location>
</feature>
<feature type="helix" evidence="4">
    <location>
        <begin position="205"/>
        <end position="213"/>
    </location>
</feature>
<feature type="strand" evidence="6">
    <location>
        <begin position="218"/>
        <end position="220"/>
    </location>
</feature>
<feature type="helix" evidence="5">
    <location>
        <begin position="234"/>
        <end position="242"/>
    </location>
</feature>
<feature type="helix" evidence="5">
    <location>
        <begin position="246"/>
        <end position="256"/>
    </location>
</feature>
<feature type="strand" evidence="5">
    <location>
        <begin position="257"/>
        <end position="262"/>
    </location>
</feature>
<feature type="turn" evidence="5">
    <location>
        <begin position="264"/>
        <end position="266"/>
    </location>
</feature>
<feature type="strand" evidence="5">
    <location>
        <begin position="269"/>
        <end position="273"/>
    </location>
</feature>
<feature type="helix" evidence="5">
    <location>
        <begin position="274"/>
        <end position="280"/>
    </location>
</feature>
<feature type="turn" evidence="5">
    <location>
        <begin position="281"/>
        <end position="283"/>
    </location>
</feature>
<reference key="1">
    <citation type="journal article" date="1997" name="Science">
        <title>The complete genome sequence of Escherichia coli K-12.</title>
        <authorList>
            <person name="Blattner F.R."/>
            <person name="Plunkett G. III"/>
            <person name="Bloch C.A."/>
            <person name="Perna N.T."/>
            <person name="Burland V."/>
            <person name="Riley M."/>
            <person name="Collado-Vides J."/>
            <person name="Glasner J.D."/>
            <person name="Rode C.K."/>
            <person name="Mayhew G.F."/>
            <person name="Gregor J."/>
            <person name="Davis N.W."/>
            <person name="Kirkpatrick H.A."/>
            <person name="Goeden M.A."/>
            <person name="Rose D.J."/>
            <person name="Mau B."/>
            <person name="Shao Y."/>
        </authorList>
    </citation>
    <scope>NUCLEOTIDE SEQUENCE [LARGE SCALE GENOMIC DNA]</scope>
    <source>
        <strain>K12 / MG1655 / ATCC 47076</strain>
    </source>
</reference>
<reference key="2">
    <citation type="journal article" date="2006" name="Mol. Syst. Biol.">
        <title>Highly accurate genome sequences of Escherichia coli K-12 strains MG1655 and W3110.</title>
        <authorList>
            <person name="Hayashi K."/>
            <person name="Morooka N."/>
            <person name="Yamamoto Y."/>
            <person name="Fujita K."/>
            <person name="Isono K."/>
            <person name="Choi S."/>
            <person name="Ohtsubo E."/>
            <person name="Baba T."/>
            <person name="Wanner B.L."/>
            <person name="Mori H."/>
            <person name="Horiuchi T."/>
        </authorList>
    </citation>
    <scope>NUCLEOTIDE SEQUENCE [LARGE SCALE GENOMIC DNA]</scope>
    <source>
        <strain>K12 / W3110 / ATCC 27325 / DSM 5911</strain>
    </source>
</reference>
<reference key="3">
    <citation type="journal article" date="1999" name="Cell">
        <title>Chaperone activity with a redox switch.</title>
        <authorList>
            <person name="Jakob U."/>
            <person name="Muse W."/>
            <person name="Eser M."/>
            <person name="Bardwell J.C.A."/>
        </authorList>
    </citation>
    <scope>CHARACTERIZATION</scope>
</reference>
<reference key="4">
    <citation type="journal article" date="2000" name="J. Biol. Chem.">
        <title>Mass spectrometry unravels disulfide bond formation as the mechanism that activates a molecular chaperone.</title>
        <authorList>
            <person name="Barbirz S."/>
            <person name="Jakob U."/>
            <person name="Glocker M.O."/>
        </authorList>
    </citation>
    <scope>DISULFIDE BONDS</scope>
</reference>
<comment type="function">
    <text>Redox regulated molecular chaperone. Protects both thermally unfolding and oxidatively damaged proteins from irreversible aggregation. Plays an important role in the bacterial defense system toward oxidative stress.</text>
</comment>
<comment type="interaction">
    <interactant intactId="EBI-562857">
        <id>P0A6Y5</id>
    </interactant>
    <interactant intactId="EBI-562857">
        <id>P0A6Y5</id>
        <label>hslO</label>
    </interactant>
    <organismsDiffer>false</organismsDiffer>
    <experiments>5</experiments>
</comment>
<comment type="interaction">
    <interactant intactId="EBI-562857">
        <id>P0A6Y5</id>
    </interactant>
    <interactant intactId="EBI-301077">
        <id>P0CE47</id>
        <label>tufA</label>
    </interactant>
    <organismsDiffer>false</organismsDiffer>
    <experiments>3</experiments>
</comment>
<comment type="subcellular location">
    <subcellularLocation>
        <location>Cytoplasm</location>
    </subcellularLocation>
</comment>
<comment type="induction">
    <text>By heat shock.</text>
</comment>
<comment type="PTM">
    <text>Under oxidizing conditions two disulfide bonds are formed involving the reactive cysteines. Under reducing conditions zinc is bound to the reactive cysteines and the protein is inactive.</text>
</comment>
<comment type="similarity">
    <text evidence="1">Belongs to the HSP33 family.</text>
</comment>
<comment type="sequence caution" evidence="3">
    <conflict type="erroneous initiation">
        <sequence resource="EMBL-CDS" id="AAA58198"/>
    </conflict>
    <text>Extended N-terminus.</text>
</comment>
<gene>
    <name evidence="1" type="primary">hslO</name>
    <name type="synonym">yrfI</name>
    <name type="ordered locus">b3401</name>
    <name type="ordered locus">JW5692</name>
</gene>
<accession>P0A6Y5</accession>
<accession>P45803</accession>
<accession>Q2M766</accession>
<evidence type="ECO:0000255" key="1">
    <source>
        <dbReference type="HAMAP-Rule" id="MF_00117"/>
    </source>
</evidence>
<evidence type="ECO:0000269" key="2">
    <source>
    </source>
</evidence>
<evidence type="ECO:0000305" key="3"/>
<evidence type="ECO:0007829" key="4">
    <source>
        <dbReference type="PDB" id="1HW7"/>
    </source>
</evidence>
<evidence type="ECO:0007829" key="5">
    <source>
        <dbReference type="PDB" id="1XJH"/>
    </source>
</evidence>
<evidence type="ECO:0007829" key="6">
    <source>
        <dbReference type="PDB" id="3M7M"/>
    </source>
</evidence>
<organism>
    <name type="scientific">Escherichia coli (strain K12)</name>
    <dbReference type="NCBI Taxonomy" id="83333"/>
    <lineage>
        <taxon>Bacteria</taxon>
        <taxon>Pseudomonadati</taxon>
        <taxon>Pseudomonadota</taxon>
        <taxon>Gammaproteobacteria</taxon>
        <taxon>Enterobacterales</taxon>
        <taxon>Enterobacteriaceae</taxon>
        <taxon>Escherichia</taxon>
    </lineage>
</organism>
<protein>
    <recommendedName>
        <fullName evidence="1">33 kDa chaperonin</fullName>
    </recommendedName>
    <alternativeName>
        <fullName>Heat shock protein 33</fullName>
        <shortName evidence="1">HSP33</shortName>
    </alternativeName>
</protein>
<name>HSLO_ECOLI</name>
<sequence>MPQHDQLHRYLFENFAVRGELVTVSETLQQILENHDYPQPVKNVLAELLVATSLLTATLKFDGDITVQLQGDGPMNLAVINGNNNQQMRGVARVQGEIPENADLKTLVGNGYVVITITPSEGERYQGVVGLEGDTLAACLEDYFMRSEQLPTRLFIRTGDVDGKPAAGGMLLQVMPAQNAQQDDFDHLATLTETIKTEELLTLPANEVLWRLYHEEEVTVYDPQDVEFKCTCSRERCADALKTLPDEEVDSILAEDGEIDMHCDYCGNHYLFNAMDIAEIRNNASPADPQVH</sequence>